<comment type="function">
    <text evidence="1">ATP-dependent RNA helicase involved spliceosome assembly and in nuclear splicing. Catalyzes an ATP-dependent conformational change of U2 snRNP. Bridges U1 and U2 snRNPs and enables stable U2 snRNP association with intron RNA (By similarity).</text>
</comment>
<comment type="catalytic activity">
    <reaction>
        <text>ATP + H2O = ADP + phosphate + H(+)</text>
        <dbReference type="Rhea" id="RHEA:13065"/>
        <dbReference type="ChEBI" id="CHEBI:15377"/>
        <dbReference type="ChEBI" id="CHEBI:15378"/>
        <dbReference type="ChEBI" id="CHEBI:30616"/>
        <dbReference type="ChEBI" id="CHEBI:43474"/>
        <dbReference type="ChEBI" id="CHEBI:456216"/>
        <dbReference type="EC" id="3.6.4.13"/>
    </reaction>
</comment>
<comment type="subcellular location">
    <subcellularLocation>
        <location evidence="1">Nucleus</location>
    </subcellularLocation>
</comment>
<comment type="domain">
    <text>The Q motif is unique to and characteristic of the DEAD box family of RNA helicases and controls ATP binding and hydrolysis.</text>
</comment>
<comment type="similarity">
    <text evidence="5">Belongs to the DEAD box helicase family. DDX46/PRP5 subfamily.</text>
</comment>
<accession>Q7SH33</accession>
<protein>
    <recommendedName>
        <fullName>Pre-mRNA-processing ATP-dependent RNA helicase prp-5</fullName>
        <ecNumber>3.6.4.13</ecNumber>
    </recommendedName>
</protein>
<gene>
    <name type="primary">prp-5</name>
    <name type="ORF">B12J7.200</name>
    <name type="ORF">NCU02696</name>
</gene>
<dbReference type="EC" id="3.6.4.13"/>
<dbReference type="EMBL" id="BX842635">
    <property type="protein sequence ID" value="CAE76515.1"/>
    <property type="molecule type" value="Genomic_DNA"/>
</dbReference>
<dbReference type="EMBL" id="CM002236">
    <property type="protein sequence ID" value="EAA36233.1"/>
    <property type="molecule type" value="Genomic_DNA"/>
</dbReference>
<dbReference type="RefSeq" id="XP_965469.1">
    <property type="nucleotide sequence ID" value="XM_960376.2"/>
</dbReference>
<dbReference type="SMR" id="Q7SH33"/>
<dbReference type="FunCoup" id="Q7SH33">
    <property type="interactions" value="997"/>
</dbReference>
<dbReference type="STRING" id="367110.Q7SH33"/>
<dbReference type="PaxDb" id="5141-EFNCRP00000002040"/>
<dbReference type="EnsemblFungi" id="EAA36233">
    <property type="protein sequence ID" value="EAA36233"/>
    <property type="gene ID" value="NCU02696"/>
</dbReference>
<dbReference type="GeneID" id="3881603"/>
<dbReference type="KEGG" id="ncr:NCU02696"/>
<dbReference type="VEuPathDB" id="FungiDB:NCU02696"/>
<dbReference type="HOGENOM" id="CLU_003041_0_3_1"/>
<dbReference type="InParanoid" id="Q7SH33"/>
<dbReference type="OrthoDB" id="196131at2759"/>
<dbReference type="Proteomes" id="UP000001805">
    <property type="component" value="Chromosome 1, Linkage Group I"/>
</dbReference>
<dbReference type="GO" id="GO:0005634">
    <property type="term" value="C:nucleus"/>
    <property type="evidence" value="ECO:0000318"/>
    <property type="project" value="GO_Central"/>
</dbReference>
<dbReference type="GO" id="GO:0005524">
    <property type="term" value="F:ATP binding"/>
    <property type="evidence" value="ECO:0007669"/>
    <property type="project" value="UniProtKB-KW"/>
</dbReference>
<dbReference type="GO" id="GO:0016887">
    <property type="term" value="F:ATP hydrolysis activity"/>
    <property type="evidence" value="ECO:0007669"/>
    <property type="project" value="RHEA"/>
</dbReference>
<dbReference type="GO" id="GO:0003676">
    <property type="term" value="F:nucleic acid binding"/>
    <property type="evidence" value="ECO:0007669"/>
    <property type="project" value="InterPro"/>
</dbReference>
<dbReference type="GO" id="GO:0003724">
    <property type="term" value="F:RNA helicase activity"/>
    <property type="evidence" value="ECO:0007669"/>
    <property type="project" value="UniProtKB-EC"/>
</dbReference>
<dbReference type="GO" id="GO:0000398">
    <property type="term" value="P:mRNA splicing, via spliceosome"/>
    <property type="evidence" value="ECO:0000318"/>
    <property type="project" value="GO_Central"/>
</dbReference>
<dbReference type="CDD" id="cd17953">
    <property type="entry name" value="DEADc_DDX46"/>
    <property type="match status" value="1"/>
</dbReference>
<dbReference type="CDD" id="cd22474">
    <property type="entry name" value="KH-I_PRP5_like"/>
    <property type="match status" value="1"/>
</dbReference>
<dbReference type="CDD" id="cd18787">
    <property type="entry name" value="SF2_C_DEAD"/>
    <property type="match status" value="1"/>
</dbReference>
<dbReference type="FunFam" id="3.40.50.300:FF:000079">
    <property type="entry name" value="probable ATP-dependent RNA helicase DDX17"/>
    <property type="match status" value="1"/>
</dbReference>
<dbReference type="Gene3D" id="3.40.50.300">
    <property type="entry name" value="P-loop containing nucleotide triphosphate hydrolases"/>
    <property type="match status" value="2"/>
</dbReference>
<dbReference type="InterPro" id="IPR011545">
    <property type="entry name" value="DEAD/DEAH_box_helicase_dom"/>
</dbReference>
<dbReference type="InterPro" id="IPR014001">
    <property type="entry name" value="Helicase_ATP-bd"/>
</dbReference>
<dbReference type="InterPro" id="IPR001650">
    <property type="entry name" value="Helicase_C-like"/>
</dbReference>
<dbReference type="InterPro" id="IPR027417">
    <property type="entry name" value="P-loop_NTPase"/>
</dbReference>
<dbReference type="InterPro" id="IPR056149">
    <property type="entry name" value="PRP5/DDX46/KHDC4_KH"/>
</dbReference>
<dbReference type="InterPro" id="IPR000629">
    <property type="entry name" value="RNA-helicase_DEAD-box_CS"/>
</dbReference>
<dbReference type="InterPro" id="IPR014014">
    <property type="entry name" value="RNA_helicase_DEAD_Q_motif"/>
</dbReference>
<dbReference type="PANTHER" id="PTHR47958">
    <property type="entry name" value="ATP-DEPENDENT RNA HELICASE DBP3"/>
    <property type="match status" value="1"/>
</dbReference>
<dbReference type="Pfam" id="PF00270">
    <property type="entry name" value="DEAD"/>
    <property type="match status" value="1"/>
</dbReference>
<dbReference type="Pfam" id="PF00271">
    <property type="entry name" value="Helicase_C"/>
    <property type="match status" value="1"/>
</dbReference>
<dbReference type="Pfam" id="PF23469">
    <property type="entry name" value="KH_12"/>
    <property type="match status" value="1"/>
</dbReference>
<dbReference type="SMART" id="SM00487">
    <property type="entry name" value="DEXDc"/>
    <property type="match status" value="1"/>
</dbReference>
<dbReference type="SMART" id="SM00490">
    <property type="entry name" value="HELICc"/>
    <property type="match status" value="1"/>
</dbReference>
<dbReference type="SUPFAM" id="SSF52540">
    <property type="entry name" value="P-loop containing nucleoside triphosphate hydrolases"/>
    <property type="match status" value="1"/>
</dbReference>
<dbReference type="PROSITE" id="PS00039">
    <property type="entry name" value="DEAD_ATP_HELICASE"/>
    <property type="match status" value="1"/>
</dbReference>
<dbReference type="PROSITE" id="PS51192">
    <property type="entry name" value="HELICASE_ATP_BIND_1"/>
    <property type="match status" value="1"/>
</dbReference>
<dbReference type="PROSITE" id="PS51194">
    <property type="entry name" value="HELICASE_CTER"/>
    <property type="match status" value="1"/>
</dbReference>
<dbReference type="PROSITE" id="PS51195">
    <property type="entry name" value="Q_MOTIF"/>
    <property type="match status" value="1"/>
</dbReference>
<reference key="1">
    <citation type="journal article" date="2003" name="Nucleic Acids Res.">
        <title>What's in the genome of a filamentous fungus? Analysis of the Neurospora genome sequence.</title>
        <authorList>
            <person name="Mannhaupt G."/>
            <person name="Montrone C."/>
            <person name="Haase D."/>
            <person name="Mewes H.-W."/>
            <person name="Aign V."/>
            <person name="Hoheisel J.D."/>
            <person name="Fartmann B."/>
            <person name="Nyakatura G."/>
            <person name="Kempken F."/>
            <person name="Maier J."/>
            <person name="Schulte U."/>
        </authorList>
    </citation>
    <scope>NUCLEOTIDE SEQUENCE [LARGE SCALE GENOMIC DNA]</scope>
    <source>
        <strain>ATCC 24698 / 74-OR23-1A / CBS 708.71 / DSM 1257 / FGSC 987</strain>
    </source>
</reference>
<reference key="2">
    <citation type="journal article" date="2003" name="Nature">
        <title>The genome sequence of the filamentous fungus Neurospora crassa.</title>
        <authorList>
            <person name="Galagan J.E."/>
            <person name="Calvo S.E."/>
            <person name="Borkovich K.A."/>
            <person name="Selker E.U."/>
            <person name="Read N.D."/>
            <person name="Jaffe D.B."/>
            <person name="FitzHugh W."/>
            <person name="Ma L.-J."/>
            <person name="Smirnov S."/>
            <person name="Purcell S."/>
            <person name="Rehman B."/>
            <person name="Elkins T."/>
            <person name="Engels R."/>
            <person name="Wang S."/>
            <person name="Nielsen C.B."/>
            <person name="Butler J."/>
            <person name="Endrizzi M."/>
            <person name="Qui D."/>
            <person name="Ianakiev P."/>
            <person name="Bell-Pedersen D."/>
            <person name="Nelson M.A."/>
            <person name="Werner-Washburne M."/>
            <person name="Selitrennikoff C.P."/>
            <person name="Kinsey J.A."/>
            <person name="Braun E.L."/>
            <person name="Zelter A."/>
            <person name="Schulte U."/>
            <person name="Kothe G.O."/>
            <person name="Jedd G."/>
            <person name="Mewes H.-W."/>
            <person name="Staben C."/>
            <person name="Marcotte E."/>
            <person name="Greenberg D."/>
            <person name="Roy A."/>
            <person name="Foley K."/>
            <person name="Naylor J."/>
            <person name="Stange-Thomann N."/>
            <person name="Barrett R."/>
            <person name="Gnerre S."/>
            <person name="Kamal M."/>
            <person name="Kamvysselis M."/>
            <person name="Mauceli E.W."/>
            <person name="Bielke C."/>
            <person name="Rudd S."/>
            <person name="Frishman D."/>
            <person name="Krystofova S."/>
            <person name="Rasmussen C."/>
            <person name="Metzenberg R.L."/>
            <person name="Perkins D.D."/>
            <person name="Kroken S."/>
            <person name="Cogoni C."/>
            <person name="Macino G."/>
            <person name="Catcheside D.E.A."/>
            <person name="Li W."/>
            <person name="Pratt R.J."/>
            <person name="Osmani S.A."/>
            <person name="DeSouza C.P.C."/>
            <person name="Glass N.L."/>
            <person name="Orbach M.J."/>
            <person name="Berglund J.A."/>
            <person name="Voelker R."/>
            <person name="Yarden O."/>
            <person name="Plamann M."/>
            <person name="Seiler S."/>
            <person name="Dunlap J.C."/>
            <person name="Radford A."/>
            <person name="Aramayo R."/>
            <person name="Natvig D.O."/>
            <person name="Alex L.A."/>
            <person name="Mannhaupt G."/>
            <person name="Ebbole D.J."/>
            <person name="Freitag M."/>
            <person name="Paulsen I."/>
            <person name="Sachs M.S."/>
            <person name="Lander E.S."/>
            <person name="Nusbaum C."/>
            <person name="Birren B.W."/>
        </authorList>
    </citation>
    <scope>NUCLEOTIDE SEQUENCE [LARGE SCALE GENOMIC DNA]</scope>
    <source>
        <strain>ATCC 24698 / 74-OR23-1A / CBS 708.71 / DSM 1257 / FGSC 987</strain>
    </source>
</reference>
<sequence length="1194" mass="131302">MARLRDSRSPSPAGSLSARKRKDDDRRDRDRRDGPVDHRRRSRSPIDRRYRDRDRDRGRDGRDRDSYRRRDRSIDRRDDDYYRGSRRDGDRRRSRDRGLDRLRSPDRRRDRSRDPDREYRPRRDDSRDRARVRREGTAESSSHRRDDVRARDQPKPGNTTAKENEPAKSTPTQPQTEAEKKAERLRKLQAMKQKHALKEAKEADVTAGLTRKLFMEMDQRASGAVVGSGTNSPAPASPAAAESPASPAPYVGKFDPKAIARNAKPARASSPVRLGDVKLGDVKVGAPVAAAASIAGQGKGAASGKAGLLQTGRPISTFGFNKSADALKTTAKRKIDMGDEEIIKRKLVKLPDLALENADDTPYADDDVAEDAEKDFDVLLAGTEEDRAEAQRLLRERREEQIQKESMAMEIDSAPSNIEVATEPVAQNPTAMDVDDEVDPLDAFMAGLEQTASGEESHSKADTLTEKKNGNIPPEAYFSDDDYGYEADGTDPTSILAMASKKKKKDIPTIDYSKLDLNPIRKNFWVEPYELSHMSEEELAELRLELDGIKVSGKNIPKPVQKWSQCGLTRPILDTIESLGFEKPTPIQMQALPVIMSGRDVIGVAKTGSGKTMAFALPMLRHVKDQDPVTGDDGAIALIMTPTRELCTQIYSDLQPFAKALKLRVVAAYGGNAIKDQIAELKRGAEIIVATPGRLIDLLAANGGRVTNLKRATYLVLDEADRMFDMGFEPQVMKIFNNVRPDRQTILFSATMPRIIDALTKKVLRDPVEITVGGRSVVAPEITQIVEVMDEGKKFNRLLELLGELYADDDDVRSLIFVERQEKADDLLRELLRRGYGCMSIHGGKDQEDRNSTISDFKKGVCPILIATSIAARGLDVKQLKLVINYDAPNHLEDYVHRAGRTGRAGNTGTAVTFITEEQENCASGIAKALEQSGQPVPDRLNEMRKAWKEKVKAGKAKDASGFGGKGLEKLDKDREAARMRERKTHKAEGEEDDVKEDAPAEDGEKKDKTKVAIQSAVSAIVSRDASKAETEDKHAIPAGAVKAGHHASSGKSGGALDKAASAISEINARLARAGQLRPGQPIDNKGPDAGAFHATLEINDFPQKARWAVTNRTNVAKILEATGTSITTKGNYYAPGKEPGPGQEPKLYILIEGDTEVVVGNALSELTRLLREGTMAAADAESRAPASGRYTIT</sequence>
<organism>
    <name type="scientific">Neurospora crassa (strain ATCC 24698 / 74-OR23-1A / CBS 708.71 / DSM 1257 / FGSC 987)</name>
    <dbReference type="NCBI Taxonomy" id="367110"/>
    <lineage>
        <taxon>Eukaryota</taxon>
        <taxon>Fungi</taxon>
        <taxon>Dikarya</taxon>
        <taxon>Ascomycota</taxon>
        <taxon>Pezizomycotina</taxon>
        <taxon>Sordariomycetes</taxon>
        <taxon>Sordariomycetidae</taxon>
        <taxon>Sordariales</taxon>
        <taxon>Sordariaceae</taxon>
        <taxon>Neurospora</taxon>
    </lineage>
</organism>
<evidence type="ECO:0000250" key="1"/>
<evidence type="ECO:0000255" key="2">
    <source>
        <dbReference type="PROSITE-ProRule" id="PRU00541"/>
    </source>
</evidence>
<evidence type="ECO:0000255" key="3">
    <source>
        <dbReference type="PROSITE-ProRule" id="PRU00542"/>
    </source>
</evidence>
<evidence type="ECO:0000256" key="4">
    <source>
        <dbReference type="SAM" id="MobiDB-lite"/>
    </source>
</evidence>
<evidence type="ECO:0000305" key="5"/>
<feature type="chain" id="PRO_0000232366" description="Pre-mRNA-processing ATP-dependent RNA helicase prp-5">
    <location>
        <begin position="1"/>
        <end position="1194"/>
    </location>
</feature>
<feature type="domain" description="Helicase ATP-binding" evidence="2">
    <location>
        <begin position="592"/>
        <end position="770"/>
    </location>
</feature>
<feature type="domain" description="Helicase C-terminal" evidence="3">
    <location>
        <begin position="797"/>
        <end position="945"/>
    </location>
</feature>
<feature type="region of interest" description="Disordered" evidence="4">
    <location>
        <begin position="1"/>
        <end position="201"/>
    </location>
</feature>
<feature type="region of interest" description="Disordered" evidence="4">
    <location>
        <begin position="224"/>
        <end position="248"/>
    </location>
</feature>
<feature type="region of interest" description="Disordered" evidence="4">
    <location>
        <begin position="452"/>
        <end position="484"/>
    </location>
</feature>
<feature type="region of interest" description="Disordered" evidence="4">
    <location>
        <begin position="952"/>
        <end position="1011"/>
    </location>
</feature>
<feature type="region of interest" description="Disordered" evidence="4">
    <location>
        <begin position="1025"/>
        <end position="1056"/>
    </location>
</feature>
<feature type="short sequence motif" description="Q motif">
    <location>
        <begin position="561"/>
        <end position="589"/>
    </location>
</feature>
<feature type="short sequence motif" description="DEAD box">
    <location>
        <begin position="718"/>
        <end position="721"/>
    </location>
</feature>
<feature type="compositionally biased region" description="Basic and acidic residues" evidence="4">
    <location>
        <begin position="21"/>
        <end position="37"/>
    </location>
</feature>
<feature type="compositionally biased region" description="Basic and acidic residues" evidence="4">
    <location>
        <begin position="44"/>
        <end position="154"/>
    </location>
</feature>
<feature type="compositionally biased region" description="Polar residues" evidence="4">
    <location>
        <begin position="156"/>
        <end position="176"/>
    </location>
</feature>
<feature type="compositionally biased region" description="Basic and acidic residues" evidence="4">
    <location>
        <begin position="177"/>
        <end position="186"/>
    </location>
</feature>
<feature type="compositionally biased region" description="Low complexity" evidence="4">
    <location>
        <begin position="232"/>
        <end position="248"/>
    </location>
</feature>
<feature type="compositionally biased region" description="Basic and acidic residues" evidence="4">
    <location>
        <begin position="455"/>
        <end position="469"/>
    </location>
</feature>
<feature type="compositionally biased region" description="Basic and acidic residues" evidence="4">
    <location>
        <begin position="967"/>
        <end position="980"/>
    </location>
</feature>
<feature type="compositionally biased region" description="Basic and acidic residues" evidence="4">
    <location>
        <begin position="997"/>
        <end position="1011"/>
    </location>
</feature>
<feature type="compositionally biased region" description="Basic and acidic residues" evidence="4">
    <location>
        <begin position="1025"/>
        <end position="1036"/>
    </location>
</feature>
<feature type="binding site" evidence="2">
    <location>
        <begin position="605"/>
        <end position="612"/>
    </location>
    <ligand>
        <name>ATP</name>
        <dbReference type="ChEBI" id="CHEBI:30616"/>
    </ligand>
</feature>
<name>PRP5_NEUCR</name>
<proteinExistence type="inferred from homology"/>
<keyword id="KW-0067">ATP-binding</keyword>
<keyword id="KW-0347">Helicase</keyword>
<keyword id="KW-0378">Hydrolase</keyword>
<keyword id="KW-0507">mRNA processing</keyword>
<keyword id="KW-0508">mRNA splicing</keyword>
<keyword id="KW-0547">Nucleotide-binding</keyword>
<keyword id="KW-0539">Nucleus</keyword>
<keyword id="KW-1185">Reference proteome</keyword>